<accession>A1VYL8</accession>
<proteinExistence type="inferred from homology"/>
<sequence>MDIRKAYLDFFASKGHEITPSSPLVPDDATLLFANAGMVPFKSIFTGEIPRPNPPRKTSCQTCIRAGGKHNDLDNVGYTARHHTFFEMLGNFSFGDYFKEQAIAYAWEFVTEVLKLPKDRLYVTVHENDDEAFNLWQKHIQKERIYKFGDKDNFWQMGDTGPCGPCSEIFYDQGEEHFNSSEDYMGGDGDRFLEIWNLVFMQYERSADGVLSPLPKPSIDTGMGLERVTAIKEGKFSNFDSSLFMPIINEISKLCNKTYIYESGASFRVIADHIRSSVFLLAQGVSFDKEGRGYVLRRILRRALRHGYLLGFKQAFMYKLVDIVCDLMGGHYTYLNEKKDFIKEQIRLEEERFLSTIENGIEIFNEELKNTKEIFSGEVAFKLYDTYGFPLDLTADMLREKNLKVDEEKFELLMNEQKARAKASWKGSGDKTASGDFKNLLEKFGENHFVGYEKAECESKILALLDEDFKEVSTLKDAGWVMLENTPFYATSGGQSADSGFIAKREVLDTQKFFNLNLSFVKAGEELKVGDIVHARIDTEKREQIARHHSATHLLHHALREILGSHVSQAGSLVESNKLRFDFTHHKALNKEELESIEKRVNEMIINSSEAILENMPLEEAKKSGAIALFNEKYQGNVRVLTLGESKELCGGTHVKNTAQIGSFYIVKESGVSAGVRRIEAVVSKAALEFVKNQLEELSKVKDELKNNDILNGVKKLKNEILSLKNELKNSSKTELDSKNIQGVEICVKRIDNGDIKAMIDDFKNKFAKAVILLIQVKDEKITLAAGVKDAPLKAGALVKEAAQILGGNGGGRDDFATAGGKDLSKINEALKQSLETIEKAL</sequence>
<feature type="chain" id="PRO_0000347543" description="Alanine--tRNA ligase">
    <location>
        <begin position="1"/>
        <end position="842"/>
    </location>
</feature>
<feature type="binding site" evidence="1">
    <location>
        <position position="549"/>
    </location>
    <ligand>
        <name>Zn(2+)</name>
        <dbReference type="ChEBI" id="CHEBI:29105"/>
    </ligand>
</feature>
<feature type="binding site" evidence="1">
    <location>
        <position position="553"/>
    </location>
    <ligand>
        <name>Zn(2+)</name>
        <dbReference type="ChEBI" id="CHEBI:29105"/>
    </ligand>
</feature>
<feature type="binding site" evidence="1">
    <location>
        <position position="650"/>
    </location>
    <ligand>
        <name>Zn(2+)</name>
        <dbReference type="ChEBI" id="CHEBI:29105"/>
    </ligand>
</feature>
<feature type="binding site" evidence="1">
    <location>
        <position position="654"/>
    </location>
    <ligand>
        <name>Zn(2+)</name>
        <dbReference type="ChEBI" id="CHEBI:29105"/>
    </ligand>
</feature>
<keyword id="KW-0030">Aminoacyl-tRNA synthetase</keyword>
<keyword id="KW-0067">ATP-binding</keyword>
<keyword id="KW-0963">Cytoplasm</keyword>
<keyword id="KW-0436">Ligase</keyword>
<keyword id="KW-0479">Metal-binding</keyword>
<keyword id="KW-0547">Nucleotide-binding</keyword>
<keyword id="KW-0648">Protein biosynthesis</keyword>
<keyword id="KW-0694">RNA-binding</keyword>
<keyword id="KW-0820">tRNA-binding</keyword>
<keyword id="KW-0862">Zinc</keyword>
<dbReference type="EC" id="6.1.1.7" evidence="1"/>
<dbReference type="EMBL" id="CP000538">
    <property type="protein sequence ID" value="EAQ73249.1"/>
    <property type="molecule type" value="Genomic_DNA"/>
</dbReference>
<dbReference type="RefSeq" id="WP_002869244.1">
    <property type="nucleotide sequence ID" value="NC_008787.1"/>
</dbReference>
<dbReference type="SMR" id="A1VYL8"/>
<dbReference type="KEGG" id="cjj:CJJ81176_0534"/>
<dbReference type="eggNOG" id="COG0013">
    <property type="taxonomic scope" value="Bacteria"/>
</dbReference>
<dbReference type="HOGENOM" id="CLU_004485_1_1_7"/>
<dbReference type="Proteomes" id="UP000000646">
    <property type="component" value="Chromosome"/>
</dbReference>
<dbReference type="GO" id="GO:0005829">
    <property type="term" value="C:cytosol"/>
    <property type="evidence" value="ECO:0007669"/>
    <property type="project" value="TreeGrafter"/>
</dbReference>
<dbReference type="GO" id="GO:0004813">
    <property type="term" value="F:alanine-tRNA ligase activity"/>
    <property type="evidence" value="ECO:0007669"/>
    <property type="project" value="UniProtKB-UniRule"/>
</dbReference>
<dbReference type="GO" id="GO:0002161">
    <property type="term" value="F:aminoacyl-tRNA deacylase activity"/>
    <property type="evidence" value="ECO:0007669"/>
    <property type="project" value="TreeGrafter"/>
</dbReference>
<dbReference type="GO" id="GO:0005524">
    <property type="term" value="F:ATP binding"/>
    <property type="evidence" value="ECO:0007669"/>
    <property type="project" value="UniProtKB-UniRule"/>
</dbReference>
<dbReference type="GO" id="GO:0000049">
    <property type="term" value="F:tRNA binding"/>
    <property type="evidence" value="ECO:0007669"/>
    <property type="project" value="UniProtKB-KW"/>
</dbReference>
<dbReference type="GO" id="GO:0008270">
    <property type="term" value="F:zinc ion binding"/>
    <property type="evidence" value="ECO:0007669"/>
    <property type="project" value="UniProtKB-UniRule"/>
</dbReference>
<dbReference type="GO" id="GO:0006419">
    <property type="term" value="P:alanyl-tRNA aminoacylation"/>
    <property type="evidence" value="ECO:0007669"/>
    <property type="project" value="UniProtKB-UniRule"/>
</dbReference>
<dbReference type="GO" id="GO:0045892">
    <property type="term" value="P:negative regulation of DNA-templated transcription"/>
    <property type="evidence" value="ECO:0007669"/>
    <property type="project" value="TreeGrafter"/>
</dbReference>
<dbReference type="CDD" id="cd00673">
    <property type="entry name" value="AlaRS_core"/>
    <property type="match status" value="1"/>
</dbReference>
<dbReference type="FunFam" id="3.10.310.40:FF:000001">
    <property type="entry name" value="Alanine--tRNA ligase"/>
    <property type="match status" value="1"/>
</dbReference>
<dbReference type="FunFam" id="3.30.54.20:FF:000001">
    <property type="entry name" value="Alanine--tRNA ligase"/>
    <property type="match status" value="1"/>
</dbReference>
<dbReference type="FunFam" id="3.30.930.10:FF:000004">
    <property type="entry name" value="Alanine--tRNA ligase"/>
    <property type="match status" value="1"/>
</dbReference>
<dbReference type="FunFam" id="3.30.980.10:FF:000004">
    <property type="entry name" value="Alanine--tRNA ligase, cytoplasmic"/>
    <property type="match status" value="1"/>
</dbReference>
<dbReference type="Gene3D" id="2.40.30.130">
    <property type="match status" value="1"/>
</dbReference>
<dbReference type="Gene3D" id="3.10.310.40">
    <property type="match status" value="1"/>
</dbReference>
<dbReference type="Gene3D" id="3.30.54.20">
    <property type="match status" value="1"/>
</dbReference>
<dbReference type="Gene3D" id="3.30.930.10">
    <property type="entry name" value="Bira Bifunctional Protein, Domain 2"/>
    <property type="match status" value="1"/>
</dbReference>
<dbReference type="Gene3D" id="3.30.980.10">
    <property type="entry name" value="Threonyl-trna Synthetase, Chain A, domain 2"/>
    <property type="match status" value="1"/>
</dbReference>
<dbReference type="HAMAP" id="MF_00036_B">
    <property type="entry name" value="Ala_tRNA_synth_B"/>
    <property type="match status" value="1"/>
</dbReference>
<dbReference type="InterPro" id="IPR045864">
    <property type="entry name" value="aa-tRNA-synth_II/BPL/LPL"/>
</dbReference>
<dbReference type="InterPro" id="IPR002318">
    <property type="entry name" value="Ala-tRNA-lgiase_IIc"/>
</dbReference>
<dbReference type="InterPro" id="IPR018162">
    <property type="entry name" value="Ala-tRNA-ligase_IIc_anticod-bd"/>
</dbReference>
<dbReference type="InterPro" id="IPR018165">
    <property type="entry name" value="Ala-tRNA-synth_IIc_core"/>
</dbReference>
<dbReference type="InterPro" id="IPR018164">
    <property type="entry name" value="Ala-tRNA-synth_IIc_N"/>
</dbReference>
<dbReference type="InterPro" id="IPR050058">
    <property type="entry name" value="Ala-tRNA_ligase"/>
</dbReference>
<dbReference type="InterPro" id="IPR023033">
    <property type="entry name" value="Ala_tRNA_ligase_euk/bac"/>
</dbReference>
<dbReference type="InterPro" id="IPR003156">
    <property type="entry name" value="DHHA1_dom"/>
</dbReference>
<dbReference type="InterPro" id="IPR018163">
    <property type="entry name" value="Thr/Ala-tRNA-synth_IIc_edit"/>
</dbReference>
<dbReference type="InterPro" id="IPR009000">
    <property type="entry name" value="Transl_B-barrel_sf"/>
</dbReference>
<dbReference type="InterPro" id="IPR012947">
    <property type="entry name" value="tRNA_SAD"/>
</dbReference>
<dbReference type="NCBIfam" id="TIGR00344">
    <property type="entry name" value="alaS"/>
    <property type="match status" value="1"/>
</dbReference>
<dbReference type="PANTHER" id="PTHR11777:SF9">
    <property type="entry name" value="ALANINE--TRNA LIGASE, CYTOPLASMIC"/>
    <property type="match status" value="1"/>
</dbReference>
<dbReference type="PANTHER" id="PTHR11777">
    <property type="entry name" value="ALANYL-TRNA SYNTHETASE"/>
    <property type="match status" value="1"/>
</dbReference>
<dbReference type="Pfam" id="PF02272">
    <property type="entry name" value="DHHA1"/>
    <property type="match status" value="1"/>
</dbReference>
<dbReference type="Pfam" id="PF01411">
    <property type="entry name" value="tRNA-synt_2c"/>
    <property type="match status" value="1"/>
</dbReference>
<dbReference type="Pfam" id="PF07973">
    <property type="entry name" value="tRNA_SAD"/>
    <property type="match status" value="1"/>
</dbReference>
<dbReference type="PRINTS" id="PR00980">
    <property type="entry name" value="TRNASYNTHALA"/>
</dbReference>
<dbReference type="SMART" id="SM00863">
    <property type="entry name" value="tRNA_SAD"/>
    <property type="match status" value="1"/>
</dbReference>
<dbReference type="SUPFAM" id="SSF55681">
    <property type="entry name" value="Class II aaRS and biotin synthetases"/>
    <property type="match status" value="1"/>
</dbReference>
<dbReference type="SUPFAM" id="SSF101353">
    <property type="entry name" value="Putative anticodon-binding domain of alanyl-tRNA synthetase (AlaRS)"/>
    <property type="match status" value="1"/>
</dbReference>
<dbReference type="SUPFAM" id="SSF55186">
    <property type="entry name" value="ThrRS/AlaRS common domain"/>
    <property type="match status" value="1"/>
</dbReference>
<dbReference type="SUPFAM" id="SSF50447">
    <property type="entry name" value="Translation proteins"/>
    <property type="match status" value="1"/>
</dbReference>
<dbReference type="PROSITE" id="PS50860">
    <property type="entry name" value="AA_TRNA_LIGASE_II_ALA"/>
    <property type="match status" value="1"/>
</dbReference>
<comment type="function">
    <text evidence="1">Catalyzes the attachment of alanine to tRNA(Ala) in a two-step reaction: alanine is first activated by ATP to form Ala-AMP and then transferred to the acceptor end of tRNA(Ala). Also edits incorrectly charged Ser-tRNA(Ala) and Gly-tRNA(Ala) via its editing domain.</text>
</comment>
<comment type="catalytic activity">
    <reaction evidence="1">
        <text>tRNA(Ala) + L-alanine + ATP = L-alanyl-tRNA(Ala) + AMP + diphosphate</text>
        <dbReference type="Rhea" id="RHEA:12540"/>
        <dbReference type="Rhea" id="RHEA-COMP:9657"/>
        <dbReference type="Rhea" id="RHEA-COMP:9923"/>
        <dbReference type="ChEBI" id="CHEBI:30616"/>
        <dbReference type="ChEBI" id="CHEBI:33019"/>
        <dbReference type="ChEBI" id="CHEBI:57972"/>
        <dbReference type="ChEBI" id="CHEBI:78442"/>
        <dbReference type="ChEBI" id="CHEBI:78497"/>
        <dbReference type="ChEBI" id="CHEBI:456215"/>
        <dbReference type="EC" id="6.1.1.7"/>
    </reaction>
</comment>
<comment type="cofactor">
    <cofactor evidence="1">
        <name>Zn(2+)</name>
        <dbReference type="ChEBI" id="CHEBI:29105"/>
    </cofactor>
    <text evidence="1">Binds 1 zinc ion per subunit.</text>
</comment>
<comment type="subcellular location">
    <subcellularLocation>
        <location evidence="1">Cytoplasm</location>
    </subcellularLocation>
</comment>
<comment type="domain">
    <text evidence="1">Consists of three domains; the N-terminal catalytic domain, the editing domain and the C-terminal C-Ala domain. The editing domain removes incorrectly charged amino acids, while the C-Ala domain, along with tRNA(Ala), serves as a bridge to cooperatively bring together the editing and aminoacylation centers thus stimulating deacylation of misacylated tRNAs.</text>
</comment>
<comment type="similarity">
    <text evidence="1">Belongs to the class-II aminoacyl-tRNA synthetase family.</text>
</comment>
<name>SYA_CAMJJ</name>
<gene>
    <name evidence="1" type="primary">alaS</name>
    <name type="ordered locus">CJJ81176_0534</name>
</gene>
<evidence type="ECO:0000255" key="1">
    <source>
        <dbReference type="HAMAP-Rule" id="MF_00036"/>
    </source>
</evidence>
<organism>
    <name type="scientific">Campylobacter jejuni subsp. jejuni serotype O:23/36 (strain 81-176)</name>
    <dbReference type="NCBI Taxonomy" id="354242"/>
    <lineage>
        <taxon>Bacteria</taxon>
        <taxon>Pseudomonadati</taxon>
        <taxon>Campylobacterota</taxon>
        <taxon>Epsilonproteobacteria</taxon>
        <taxon>Campylobacterales</taxon>
        <taxon>Campylobacteraceae</taxon>
        <taxon>Campylobacter</taxon>
    </lineage>
</organism>
<protein>
    <recommendedName>
        <fullName evidence="1">Alanine--tRNA ligase</fullName>
        <ecNumber evidence="1">6.1.1.7</ecNumber>
    </recommendedName>
    <alternativeName>
        <fullName evidence="1">Alanyl-tRNA synthetase</fullName>
        <shortName evidence="1">AlaRS</shortName>
    </alternativeName>
</protein>
<reference key="1">
    <citation type="submission" date="2006-12" db="EMBL/GenBank/DDBJ databases">
        <authorList>
            <person name="Fouts D.E."/>
            <person name="Nelson K.E."/>
            <person name="Sebastian Y."/>
        </authorList>
    </citation>
    <scope>NUCLEOTIDE SEQUENCE [LARGE SCALE GENOMIC DNA]</scope>
    <source>
        <strain>81-176</strain>
    </source>
</reference>